<gene>
    <name type="primary">acoA</name>
    <name type="ordered locus">TTHA0726</name>
</gene>
<dbReference type="EC" id="4.2.1.3" evidence="3"/>
<dbReference type="EC" id="4.2.1.99" evidence="3"/>
<dbReference type="EMBL" id="AP008226">
    <property type="protein sequence ID" value="BAD70549.1"/>
    <property type="molecule type" value="Genomic_DNA"/>
</dbReference>
<dbReference type="RefSeq" id="YP_143992.1">
    <property type="nucleotide sequence ID" value="NC_006461.1"/>
</dbReference>
<dbReference type="SMR" id="Q5SMF6"/>
<dbReference type="EnsemblBacteria" id="BAD70549">
    <property type="protein sequence ID" value="BAD70549"/>
    <property type="gene ID" value="BAD70549"/>
</dbReference>
<dbReference type="GeneID" id="3169911"/>
<dbReference type="KEGG" id="ttj:TTHA0726"/>
<dbReference type="PATRIC" id="fig|300852.9.peg.719"/>
<dbReference type="eggNOG" id="COG1048">
    <property type="taxonomic scope" value="Bacteria"/>
</dbReference>
<dbReference type="HOGENOM" id="CLU_013476_2_1_0"/>
<dbReference type="PhylomeDB" id="Q5SMF6"/>
<dbReference type="UniPathway" id="UPA00223">
    <property type="reaction ID" value="UER00718"/>
</dbReference>
<dbReference type="UniPathway" id="UPA00946"/>
<dbReference type="Proteomes" id="UP000000532">
    <property type="component" value="Chromosome"/>
</dbReference>
<dbReference type="GO" id="GO:0047456">
    <property type="term" value="F:2-methylisocitrate dehydratase activity"/>
    <property type="evidence" value="ECO:0000250"/>
    <property type="project" value="UniProtKB"/>
</dbReference>
<dbReference type="GO" id="GO:0051539">
    <property type="term" value="F:4 iron, 4 sulfur cluster binding"/>
    <property type="evidence" value="ECO:0000250"/>
    <property type="project" value="UniProtKB"/>
</dbReference>
<dbReference type="GO" id="GO:0003994">
    <property type="term" value="F:aconitate hydratase activity"/>
    <property type="evidence" value="ECO:0000314"/>
    <property type="project" value="UniProtKB"/>
</dbReference>
<dbReference type="GO" id="GO:0046872">
    <property type="term" value="F:metal ion binding"/>
    <property type="evidence" value="ECO:0007669"/>
    <property type="project" value="UniProtKB-KW"/>
</dbReference>
<dbReference type="GO" id="GO:0003730">
    <property type="term" value="F:mRNA 3'-UTR binding"/>
    <property type="evidence" value="ECO:0000250"/>
    <property type="project" value="UniProtKB"/>
</dbReference>
<dbReference type="GO" id="GO:0003729">
    <property type="term" value="F:mRNA binding"/>
    <property type="evidence" value="ECO:0000250"/>
    <property type="project" value="UniProtKB"/>
</dbReference>
<dbReference type="GO" id="GO:0009085">
    <property type="term" value="P:lysine biosynthetic process"/>
    <property type="evidence" value="ECO:0007669"/>
    <property type="project" value="UniProtKB-KW"/>
</dbReference>
<dbReference type="GO" id="GO:0019679">
    <property type="term" value="P:propionate metabolic process, methylcitrate cycle"/>
    <property type="evidence" value="ECO:0000304"/>
    <property type="project" value="UniProtKB"/>
</dbReference>
<dbReference type="GO" id="GO:0006099">
    <property type="term" value="P:tricarboxylic acid cycle"/>
    <property type="evidence" value="ECO:0000304"/>
    <property type="project" value="UniProtKB"/>
</dbReference>
<dbReference type="CDD" id="cd01586">
    <property type="entry name" value="AcnA_IRP"/>
    <property type="match status" value="1"/>
</dbReference>
<dbReference type="CDD" id="cd01580">
    <property type="entry name" value="AcnA_IRP_Swivel"/>
    <property type="match status" value="1"/>
</dbReference>
<dbReference type="FunFam" id="3.20.19.10:FF:000001">
    <property type="entry name" value="Aconitate hydratase"/>
    <property type="match status" value="1"/>
</dbReference>
<dbReference type="FunFam" id="3.30.499.10:FF:000002">
    <property type="entry name" value="Aconitate hydratase"/>
    <property type="match status" value="1"/>
</dbReference>
<dbReference type="FunFam" id="3.30.499.10:FF:000020">
    <property type="entry name" value="Aconitate hydratase A"/>
    <property type="match status" value="1"/>
</dbReference>
<dbReference type="Gene3D" id="6.10.190.10">
    <property type="match status" value="1"/>
</dbReference>
<dbReference type="Gene3D" id="3.30.499.10">
    <property type="entry name" value="Aconitase, domain 3"/>
    <property type="match status" value="2"/>
</dbReference>
<dbReference type="Gene3D" id="3.20.19.10">
    <property type="entry name" value="Aconitase, domain 4"/>
    <property type="match status" value="1"/>
</dbReference>
<dbReference type="InterPro" id="IPR044137">
    <property type="entry name" value="AcnA_IRP_Swivel"/>
</dbReference>
<dbReference type="InterPro" id="IPR015931">
    <property type="entry name" value="Acnase/IPM_dHydase_lsu_aba_1/3"/>
</dbReference>
<dbReference type="InterPro" id="IPR001030">
    <property type="entry name" value="Acoase/IPM_deHydtase_lsu_aba"/>
</dbReference>
<dbReference type="InterPro" id="IPR015928">
    <property type="entry name" value="Aconitase/3IPM_dehydase_swvl"/>
</dbReference>
<dbReference type="InterPro" id="IPR006249">
    <property type="entry name" value="Aconitase/IRP2"/>
</dbReference>
<dbReference type="InterPro" id="IPR018136">
    <property type="entry name" value="Aconitase_4Fe-4S_BS"/>
</dbReference>
<dbReference type="InterPro" id="IPR036008">
    <property type="entry name" value="Aconitase_4Fe-4S_dom"/>
</dbReference>
<dbReference type="InterPro" id="IPR000573">
    <property type="entry name" value="AconitaseA/IPMdHydase_ssu_swvl"/>
</dbReference>
<dbReference type="NCBIfam" id="TIGR01341">
    <property type="entry name" value="aconitase_1"/>
    <property type="match status" value="1"/>
</dbReference>
<dbReference type="NCBIfam" id="NF006757">
    <property type="entry name" value="PRK09277.1"/>
    <property type="match status" value="1"/>
</dbReference>
<dbReference type="NCBIfam" id="NF009520">
    <property type="entry name" value="PRK12881.1"/>
    <property type="match status" value="1"/>
</dbReference>
<dbReference type="PANTHER" id="PTHR11670">
    <property type="entry name" value="ACONITASE/IRON-RESPONSIVE ELEMENT FAMILY MEMBER"/>
    <property type="match status" value="1"/>
</dbReference>
<dbReference type="Pfam" id="PF00330">
    <property type="entry name" value="Aconitase"/>
    <property type="match status" value="1"/>
</dbReference>
<dbReference type="Pfam" id="PF00694">
    <property type="entry name" value="Aconitase_C"/>
    <property type="match status" value="1"/>
</dbReference>
<dbReference type="PRINTS" id="PR00415">
    <property type="entry name" value="ACONITASE"/>
</dbReference>
<dbReference type="SUPFAM" id="SSF53732">
    <property type="entry name" value="Aconitase iron-sulfur domain"/>
    <property type="match status" value="1"/>
</dbReference>
<dbReference type="SUPFAM" id="SSF52016">
    <property type="entry name" value="LeuD/IlvD-like"/>
    <property type="match status" value="1"/>
</dbReference>
<dbReference type="PROSITE" id="PS00450">
    <property type="entry name" value="ACONITASE_1"/>
    <property type="match status" value="1"/>
</dbReference>
<dbReference type="PROSITE" id="PS01244">
    <property type="entry name" value="ACONITASE_2"/>
    <property type="match status" value="1"/>
</dbReference>
<comment type="function">
    <text evidence="1 3 4">Involved in the catabolism of short chain fatty acids (SCFA) via the tricarboxylic acid (TCA)(acetyl degradation route) and probably the 2-methylcitrate cycle I (propionate degradation route). Catalyzes the reversible isomerization of citrate to isocitrate via cis-aconitate. Also able to catalyze the hydration of cis-homoaconitate to yield (R)-homocitrate, but with a lower efficiency (PubMed:23106124). Could catalyze the hydration of 2-methyl-cis-aconitate to yield (2R,3S)-2-methylisocitrate. The apo form of AcnA functions as a RNA-binding regulatory protein (By similarity).</text>
</comment>
<comment type="catalytic activity">
    <reaction evidence="3">
        <text>citrate = D-threo-isocitrate</text>
        <dbReference type="Rhea" id="RHEA:10336"/>
        <dbReference type="ChEBI" id="CHEBI:15562"/>
        <dbReference type="ChEBI" id="CHEBI:16947"/>
        <dbReference type="EC" id="4.2.1.3"/>
    </reaction>
</comment>
<comment type="catalytic activity">
    <reaction evidence="3">
        <text>(2S,3R)-3-hydroxybutane-1,2,3-tricarboxylate = 2-methyl-cis-aconitate + H2O</text>
        <dbReference type="Rhea" id="RHEA:17941"/>
        <dbReference type="ChEBI" id="CHEBI:15377"/>
        <dbReference type="ChEBI" id="CHEBI:57429"/>
        <dbReference type="ChEBI" id="CHEBI:57872"/>
        <dbReference type="EC" id="4.2.1.99"/>
    </reaction>
</comment>
<comment type="cofactor">
    <cofactor evidence="1">
        <name>[4Fe-4S] cluster</name>
        <dbReference type="ChEBI" id="CHEBI:49883"/>
    </cofactor>
    <text evidence="1">Binds 1 [4Fe-4S] cluster per subunit.</text>
</comment>
<comment type="pathway">
    <text evidence="7">Carbohydrate metabolism; tricarboxylic acid cycle; isocitrate from oxaloacetate: step 2/2.</text>
</comment>
<comment type="pathway">
    <text evidence="7">Organic acid metabolism; propanoate degradation.</text>
</comment>
<comment type="subunit">
    <text evidence="1">Monomer.</text>
</comment>
<comment type="similarity">
    <text evidence="6">Belongs to the aconitase/IPM isomerase family.</text>
</comment>
<proteinExistence type="inferred from homology"/>
<keyword id="KW-0028">Amino-acid biosynthesis</keyword>
<keyword id="KW-0408">Iron</keyword>
<keyword id="KW-0411">Iron-sulfur</keyword>
<keyword id="KW-0456">Lyase</keyword>
<keyword id="KW-0457">Lysine biosynthesis</keyword>
<keyword id="KW-0479">Metal-binding</keyword>
<keyword id="KW-1185">Reference proteome</keyword>
<keyword id="KW-0694">RNA-binding</keyword>
<keyword id="KW-0816">Tricarboxylic acid cycle</keyword>
<sequence length="902" mass="99768">MKNSFQTLKTLTTKSGTYGYYDLQELERKGVAEVSRLPFSIRVMLESLLRNEDGYQVTREDIEALARWRPDPGEINVPLKLARVILQDFTGVPAVVDLAAMRDAIKAKGGDPKRINPVVPADLVIDHSVQVDAFGTAYAFFYNVEKEYERNRERYLLLKWAQNALENFRVVPPGTGIVHQVNIEYLTKVVMTGKRDGLTLAFPDSLVGTDSHTTMVNGLGVLGWGVGGIEAEAVMLGQPYYMLAPRVVGFKLYGELPEGATATDLVLTVTEMLRKHGVVGKFVEFYGPGVAKLSTPDRATIANMAPEYGATMGFFPVDEETLNYLRQTGRPEELVELVEAYTKAVGLFRTPEAEEKVQYSEYLELDLSAVEPSLAGPKRPQDRVPLKEVKKSFLAHLTKPVKERGFGLSEDQLQRKVLVKRRDEEFELTHGSVVIAAITSCTNTSNPSVMLGAGLLAKKAVEAGLDRKPWVKTSLAPGSKVVTDYLEMSGLMPFLEALGFHLVGYGCTTCIGNSGPLPEDIAKAVEEGNLVVAAVLSGNRNFEGRINPHVKANYLASPMLVVAYALAGRMDIDFTTEPLGFDPNGKPIYLKDIWPSMEEIREAIRKTLDPELFKKEYSKVFEGDERWQALPAPTGELYQWDPESTYIQNPPFFEDLGERKVEDIRGARVLLVLGDSVTTDHISPAGAIPVKSPAGQYLISKGVKPEDFNSYGSRRGNHEVMMRGTFANIRIKNLMLDGIEGGYAKKLPEGDVDFVYNVAMRYKAEGTPLLVIAGKEYGTGSSRDWAAKGTYLLGIRAVLAESFERIHRSNLVGMGVLPLEFLPGENRETLGLTGYEVYDILGLEDLKPRKLVDIVARREDGSEVRFQAIARLDTPVEVDYYKNGGILQTVLLNMLKEAKATE</sequence>
<name>ACNA_THET8</name>
<accession>Q5SMF6</accession>
<reference key="1">
    <citation type="submission" date="2004-11" db="EMBL/GenBank/DDBJ databases">
        <title>Complete genome sequence of Thermus thermophilus HB8.</title>
        <authorList>
            <person name="Masui R."/>
            <person name="Kurokawa K."/>
            <person name="Nakagawa N."/>
            <person name="Tokunaga F."/>
            <person name="Koyama Y."/>
            <person name="Shibata T."/>
            <person name="Oshima T."/>
            <person name="Yokoyama S."/>
            <person name="Yasunaga T."/>
            <person name="Kuramitsu S."/>
        </authorList>
    </citation>
    <scope>NUCLEOTIDE SEQUENCE [LARGE SCALE GENOMIC DNA]</scope>
    <source>
        <strain>ATCC 27634 / DSM 579 / HB8</strain>
    </source>
</reference>
<reference key="2">
    <citation type="journal article" date="2012" name="Mol. Microbiol.">
        <title>The fungal alpha-aminoadipate pathway for lysine biosynthesis requires two enzymes of the aconitase family for the isomerization of homocitrate to homoisocitrate.</title>
        <authorList>
            <person name="Fazius F."/>
            <person name="Shelest E."/>
            <person name="Gebhardt P."/>
            <person name="Brock M."/>
        </authorList>
    </citation>
    <scope>IDENTIFICATION</scope>
    <scope>FUNCTION</scope>
    <scope>PATHWAY</scope>
    <source>
        <strain>STI11057</strain>
    </source>
</reference>
<evidence type="ECO:0000250" key="1">
    <source>
        <dbReference type="UniProtKB" id="P09339"/>
    </source>
</evidence>
<evidence type="ECO:0000250" key="2">
    <source>
        <dbReference type="UniProtKB" id="P36683"/>
    </source>
</evidence>
<evidence type="ECO:0000250" key="3">
    <source>
        <dbReference type="UniProtKB" id="Q8ZP52"/>
    </source>
</evidence>
<evidence type="ECO:0000269" key="4">
    <source>
    </source>
</evidence>
<evidence type="ECO:0000303" key="5">
    <source>
    </source>
</evidence>
<evidence type="ECO:0000305" key="6"/>
<evidence type="ECO:0000305" key="7">
    <source>
    </source>
</evidence>
<protein>
    <recommendedName>
        <fullName evidence="5">Aconitate hydratase A</fullName>
        <shortName evidence="5">ACN</shortName>
        <shortName evidence="5">Aconitase</shortName>
        <ecNumber evidence="3">4.2.1.3</ecNumber>
    </recommendedName>
    <alternativeName>
        <fullName evidence="3">(2R,3S)-2-methylisocitrate dehydratase</fullName>
    </alternativeName>
    <alternativeName>
        <fullName evidence="3">(2S,3R)-3-hydroxybutane-1,2,3-tricarboxylate dehydratase</fullName>
    </alternativeName>
    <alternativeName>
        <fullName evidence="1">Iron-responsive protein-like</fullName>
        <shortName evidence="1">IRP-like</shortName>
    </alternativeName>
    <alternativeName>
        <fullName evidence="3">Probable 2-methyl-cis-aconitate hydratase</fullName>
        <ecNumber evidence="3">4.2.1.99</ecNumber>
    </alternativeName>
    <alternativeName>
        <fullName evidence="1">RNA-binding protein</fullName>
    </alternativeName>
</protein>
<feature type="chain" id="PRO_0000425285" description="Aconitate hydratase A">
    <location>
        <begin position="1"/>
        <end position="902"/>
    </location>
</feature>
<feature type="binding site" evidence="2">
    <location>
        <position position="441"/>
    </location>
    <ligand>
        <name>[4Fe-4S] cluster</name>
        <dbReference type="ChEBI" id="CHEBI:49883"/>
    </ligand>
</feature>
<feature type="binding site" evidence="2">
    <location>
        <position position="507"/>
    </location>
    <ligand>
        <name>[4Fe-4S] cluster</name>
        <dbReference type="ChEBI" id="CHEBI:49883"/>
    </ligand>
</feature>
<feature type="binding site" evidence="2">
    <location>
        <position position="510"/>
    </location>
    <ligand>
        <name>[4Fe-4S] cluster</name>
        <dbReference type="ChEBI" id="CHEBI:49883"/>
    </ligand>
</feature>
<organism>
    <name type="scientific">Thermus thermophilus (strain ATCC 27634 / DSM 579 / HB8)</name>
    <dbReference type="NCBI Taxonomy" id="300852"/>
    <lineage>
        <taxon>Bacteria</taxon>
        <taxon>Thermotogati</taxon>
        <taxon>Deinococcota</taxon>
        <taxon>Deinococci</taxon>
        <taxon>Thermales</taxon>
        <taxon>Thermaceae</taxon>
        <taxon>Thermus</taxon>
    </lineage>
</organism>